<feature type="chain" id="PRO_1000071349" description="Large-conductance mechanosensitive channel">
    <location>
        <begin position="1"/>
        <end position="143"/>
    </location>
</feature>
<feature type="transmembrane region" description="Helical" evidence="1">
    <location>
        <begin position="16"/>
        <end position="36"/>
    </location>
</feature>
<feature type="transmembrane region" description="Helical" evidence="1">
    <location>
        <begin position="40"/>
        <end position="60"/>
    </location>
</feature>
<feature type="transmembrane region" description="Helical" evidence="1">
    <location>
        <begin position="87"/>
        <end position="107"/>
    </location>
</feature>
<keyword id="KW-0997">Cell inner membrane</keyword>
<keyword id="KW-1003">Cell membrane</keyword>
<keyword id="KW-0407">Ion channel</keyword>
<keyword id="KW-0406">Ion transport</keyword>
<keyword id="KW-0472">Membrane</keyword>
<keyword id="KW-0812">Transmembrane</keyword>
<keyword id="KW-1133">Transmembrane helix</keyword>
<keyword id="KW-0813">Transport</keyword>
<organism>
    <name type="scientific">Psychrobacter sp. (strain PRwf-1)</name>
    <dbReference type="NCBI Taxonomy" id="349106"/>
    <lineage>
        <taxon>Bacteria</taxon>
        <taxon>Pseudomonadati</taxon>
        <taxon>Pseudomonadota</taxon>
        <taxon>Gammaproteobacteria</taxon>
        <taxon>Moraxellales</taxon>
        <taxon>Moraxellaceae</taxon>
        <taxon>Psychrobacter</taxon>
    </lineage>
</organism>
<comment type="function">
    <text evidence="1">Channel that opens in response to stretch forces in the membrane lipid bilayer. May participate in the regulation of osmotic pressure changes within the cell.</text>
</comment>
<comment type="subunit">
    <text evidence="1">Homopentamer.</text>
</comment>
<comment type="subcellular location">
    <subcellularLocation>
        <location evidence="1">Cell inner membrane</location>
        <topology evidence="1">Multi-pass membrane protein</topology>
    </subcellularLocation>
</comment>
<comment type="similarity">
    <text evidence="1">Belongs to the MscL family.</text>
</comment>
<reference key="1">
    <citation type="submission" date="2007-05" db="EMBL/GenBank/DDBJ databases">
        <title>Complete sequence of chromosome of Psychrobacter sp. PRwf-1.</title>
        <authorList>
            <consortium name="US DOE Joint Genome Institute"/>
            <person name="Copeland A."/>
            <person name="Lucas S."/>
            <person name="Lapidus A."/>
            <person name="Barry K."/>
            <person name="Detter J.C."/>
            <person name="Glavina del Rio T."/>
            <person name="Hammon N."/>
            <person name="Israni S."/>
            <person name="Dalin E."/>
            <person name="Tice H."/>
            <person name="Pitluck S."/>
            <person name="Chain P."/>
            <person name="Malfatti S."/>
            <person name="Shin M."/>
            <person name="Vergez L."/>
            <person name="Schmutz J."/>
            <person name="Larimer F."/>
            <person name="Land M."/>
            <person name="Hauser L."/>
            <person name="Kyrpides N."/>
            <person name="Kim E."/>
            <person name="Tiedje J."/>
            <person name="Richardson P."/>
        </authorList>
    </citation>
    <scope>NUCLEOTIDE SEQUENCE [LARGE SCALE GENOMIC DNA]</scope>
    <source>
        <strain>PRwf-1</strain>
    </source>
</reference>
<protein>
    <recommendedName>
        <fullName evidence="1">Large-conductance mechanosensitive channel</fullName>
    </recommendedName>
</protein>
<proteinExistence type="inferred from homology"/>
<accession>A5WCE5</accession>
<name>MSCL_PSYWF</name>
<dbReference type="EMBL" id="CP000713">
    <property type="protein sequence ID" value="ABQ93336.1"/>
    <property type="molecule type" value="Genomic_DNA"/>
</dbReference>
<dbReference type="SMR" id="A5WCE5"/>
<dbReference type="STRING" id="349106.PsycPRwf_0381"/>
<dbReference type="KEGG" id="prw:PsycPRwf_0381"/>
<dbReference type="eggNOG" id="COG1970">
    <property type="taxonomic scope" value="Bacteria"/>
</dbReference>
<dbReference type="HOGENOM" id="CLU_095787_0_1_6"/>
<dbReference type="GO" id="GO:0005886">
    <property type="term" value="C:plasma membrane"/>
    <property type="evidence" value="ECO:0007669"/>
    <property type="project" value="UniProtKB-SubCell"/>
</dbReference>
<dbReference type="GO" id="GO:0008381">
    <property type="term" value="F:mechanosensitive monoatomic ion channel activity"/>
    <property type="evidence" value="ECO:0007669"/>
    <property type="project" value="UniProtKB-UniRule"/>
</dbReference>
<dbReference type="Gene3D" id="1.10.1200.120">
    <property type="entry name" value="Large-conductance mechanosensitive channel, MscL, domain 1"/>
    <property type="match status" value="1"/>
</dbReference>
<dbReference type="HAMAP" id="MF_00115">
    <property type="entry name" value="MscL"/>
    <property type="match status" value="1"/>
</dbReference>
<dbReference type="InterPro" id="IPR019823">
    <property type="entry name" value="Mechanosensitive_channel_CS"/>
</dbReference>
<dbReference type="InterPro" id="IPR001185">
    <property type="entry name" value="MS_channel"/>
</dbReference>
<dbReference type="InterPro" id="IPR037673">
    <property type="entry name" value="MSC/AndL"/>
</dbReference>
<dbReference type="InterPro" id="IPR036019">
    <property type="entry name" value="MscL_channel"/>
</dbReference>
<dbReference type="NCBIfam" id="TIGR00220">
    <property type="entry name" value="mscL"/>
    <property type="match status" value="1"/>
</dbReference>
<dbReference type="NCBIfam" id="NF010557">
    <property type="entry name" value="PRK13952.1"/>
    <property type="match status" value="1"/>
</dbReference>
<dbReference type="PANTHER" id="PTHR30266:SF2">
    <property type="entry name" value="LARGE-CONDUCTANCE MECHANOSENSITIVE CHANNEL"/>
    <property type="match status" value="1"/>
</dbReference>
<dbReference type="PANTHER" id="PTHR30266">
    <property type="entry name" value="MECHANOSENSITIVE CHANNEL MSCL"/>
    <property type="match status" value="1"/>
</dbReference>
<dbReference type="Pfam" id="PF01741">
    <property type="entry name" value="MscL"/>
    <property type="match status" value="1"/>
</dbReference>
<dbReference type="PRINTS" id="PR01264">
    <property type="entry name" value="MECHCHANNEL"/>
</dbReference>
<dbReference type="SUPFAM" id="SSF81330">
    <property type="entry name" value="Gated mechanosensitive channel"/>
    <property type="match status" value="1"/>
</dbReference>
<dbReference type="PROSITE" id="PS01327">
    <property type="entry name" value="MSCL"/>
    <property type="match status" value="1"/>
</dbReference>
<sequence>MSMMSEFKEFALKGNVMDLAVGVIIGGAFSGITNSLVEDIIMPIVAFIAGGELNFKNMFILLGDAPEGVAMTYDALKEAGVPLLAYGSFITVLINFLILAFIIFMMVKGMNKMRRKNEVEEVVEETPSEEVLLLREISQKLSK</sequence>
<evidence type="ECO:0000255" key="1">
    <source>
        <dbReference type="HAMAP-Rule" id="MF_00115"/>
    </source>
</evidence>
<gene>
    <name evidence="1" type="primary">mscL</name>
    <name type="ordered locus">PsycPRwf_0381</name>
</gene>